<sequence>MFSPKIIILSTGSELTSGRSQDTNSSWIANELFGIGFTVSKLVVLPDDPEAILEELRTLVSLATKKNPVLLIMTGGLGPTEDDYTLEVVCKLKGVSSVESVVARQRIEAFYKLRGKNFQESLQTAIRQISVPKDSTILNNEVGIAPGFIVSLGENAHLGCMPGVPGEMTEMFREEFSTWILKKYSTRELHSGFRFIWWMSESQFQKEFISKEESVTSEKVIWGVAAKRGYIRVSFQSNERALVDFLLKKLDEIYGPKSTLDVFEELPKLLIEKKITVGTAESCTGGLISKIFTDKPGSSTYFYGGVISYDNGVKEGILGVKKNTLKEFGAVSMETAKEMAEGALVALGVDYSISVTGIAGPGGGTPQKKVGLVYFGIGQKNEKTETHEHYFPFPRSSFREFAAHTGIYLLYNRLKRLA</sequence>
<organism>
    <name type="scientific">Leptospira interrogans serogroup Icterohaemorrhagiae serovar Lai (strain 56601)</name>
    <dbReference type="NCBI Taxonomy" id="189518"/>
    <lineage>
        <taxon>Bacteria</taxon>
        <taxon>Pseudomonadati</taxon>
        <taxon>Spirochaetota</taxon>
        <taxon>Spirochaetia</taxon>
        <taxon>Leptospirales</taxon>
        <taxon>Leptospiraceae</taxon>
        <taxon>Leptospira</taxon>
    </lineage>
</organism>
<keyword id="KW-1185">Reference proteome</keyword>
<name>CINAL_LEPIN</name>
<accession>Q8F5J2</accession>
<protein>
    <recommendedName>
        <fullName evidence="1">CinA-like protein</fullName>
    </recommendedName>
</protein>
<gene>
    <name type="ordered locus">LA_1689</name>
</gene>
<evidence type="ECO:0000255" key="1">
    <source>
        <dbReference type="HAMAP-Rule" id="MF_00226"/>
    </source>
</evidence>
<dbReference type="EMBL" id="AE010300">
    <property type="protein sequence ID" value="AAN48888.1"/>
    <property type="molecule type" value="Genomic_DNA"/>
</dbReference>
<dbReference type="RefSeq" id="NP_711870.1">
    <property type="nucleotide sequence ID" value="NC_004342.2"/>
</dbReference>
<dbReference type="RefSeq" id="WP_000492627.1">
    <property type="nucleotide sequence ID" value="NC_004342.2"/>
</dbReference>
<dbReference type="SMR" id="Q8F5J2"/>
<dbReference type="STRING" id="189518.LA_1689"/>
<dbReference type="PaxDb" id="189518-LA_1689"/>
<dbReference type="EnsemblBacteria" id="AAN48888">
    <property type="protein sequence ID" value="AAN48888"/>
    <property type="gene ID" value="LA_1689"/>
</dbReference>
<dbReference type="KEGG" id="lil:LA_1689"/>
<dbReference type="PATRIC" id="fig|189518.3.peg.1682"/>
<dbReference type="HOGENOM" id="CLU_030805_9_3_12"/>
<dbReference type="InParanoid" id="Q8F5J2"/>
<dbReference type="OrthoDB" id="9801454at2"/>
<dbReference type="Proteomes" id="UP000001408">
    <property type="component" value="Chromosome I"/>
</dbReference>
<dbReference type="CDD" id="cd00885">
    <property type="entry name" value="cinA"/>
    <property type="match status" value="1"/>
</dbReference>
<dbReference type="Gene3D" id="3.90.950.20">
    <property type="entry name" value="CinA-like"/>
    <property type="match status" value="1"/>
</dbReference>
<dbReference type="Gene3D" id="3.40.980.10">
    <property type="entry name" value="MoaB/Mog-like domain"/>
    <property type="match status" value="1"/>
</dbReference>
<dbReference type="HAMAP" id="MF_00226_B">
    <property type="entry name" value="CinA_B"/>
    <property type="match status" value="1"/>
</dbReference>
<dbReference type="InterPro" id="IPR050101">
    <property type="entry name" value="CinA"/>
</dbReference>
<dbReference type="InterPro" id="IPR036653">
    <property type="entry name" value="CinA-like_C"/>
</dbReference>
<dbReference type="InterPro" id="IPR008136">
    <property type="entry name" value="CinA_C"/>
</dbReference>
<dbReference type="InterPro" id="IPR008135">
    <property type="entry name" value="Competence-induced_CinA"/>
</dbReference>
<dbReference type="InterPro" id="IPR036425">
    <property type="entry name" value="MoaB/Mog-like_dom_sf"/>
</dbReference>
<dbReference type="InterPro" id="IPR001453">
    <property type="entry name" value="MoaB/Mog_dom"/>
</dbReference>
<dbReference type="NCBIfam" id="TIGR00199">
    <property type="entry name" value="PncC_domain"/>
    <property type="match status" value="1"/>
</dbReference>
<dbReference type="PANTHER" id="PTHR13939">
    <property type="entry name" value="NICOTINAMIDE-NUCLEOTIDE AMIDOHYDROLASE PNCC"/>
    <property type="match status" value="1"/>
</dbReference>
<dbReference type="PANTHER" id="PTHR13939:SF0">
    <property type="entry name" value="NMN AMIDOHYDROLASE-LIKE PROTEIN YFAY"/>
    <property type="match status" value="1"/>
</dbReference>
<dbReference type="Pfam" id="PF02464">
    <property type="entry name" value="CinA"/>
    <property type="match status" value="1"/>
</dbReference>
<dbReference type="Pfam" id="PF00994">
    <property type="entry name" value="MoCF_biosynth"/>
    <property type="match status" value="1"/>
</dbReference>
<dbReference type="PIRSF" id="PIRSF006728">
    <property type="entry name" value="CinA"/>
    <property type="match status" value="1"/>
</dbReference>
<dbReference type="SMART" id="SM00852">
    <property type="entry name" value="MoCF_biosynth"/>
    <property type="match status" value="1"/>
</dbReference>
<dbReference type="SUPFAM" id="SSF142433">
    <property type="entry name" value="CinA-like"/>
    <property type="match status" value="1"/>
</dbReference>
<dbReference type="SUPFAM" id="SSF53218">
    <property type="entry name" value="Molybdenum cofactor biosynthesis proteins"/>
    <property type="match status" value="1"/>
</dbReference>
<comment type="similarity">
    <text evidence="1">Belongs to the CinA family.</text>
</comment>
<feature type="chain" id="PRO_0000336505" description="CinA-like protein">
    <location>
        <begin position="1"/>
        <end position="418"/>
    </location>
</feature>
<reference key="1">
    <citation type="journal article" date="2003" name="Nature">
        <title>Unique physiological and pathogenic features of Leptospira interrogans revealed by whole-genome sequencing.</title>
        <authorList>
            <person name="Ren S.-X."/>
            <person name="Fu G."/>
            <person name="Jiang X.-G."/>
            <person name="Zeng R."/>
            <person name="Miao Y.-G."/>
            <person name="Xu H."/>
            <person name="Zhang Y.-X."/>
            <person name="Xiong H."/>
            <person name="Lu G."/>
            <person name="Lu L.-F."/>
            <person name="Jiang H.-Q."/>
            <person name="Jia J."/>
            <person name="Tu Y.-F."/>
            <person name="Jiang J.-X."/>
            <person name="Gu W.-Y."/>
            <person name="Zhang Y.-Q."/>
            <person name="Cai Z."/>
            <person name="Sheng H.-H."/>
            <person name="Yin H.-F."/>
            <person name="Zhang Y."/>
            <person name="Zhu G.-F."/>
            <person name="Wan M."/>
            <person name="Huang H.-L."/>
            <person name="Qian Z."/>
            <person name="Wang S.-Y."/>
            <person name="Ma W."/>
            <person name="Yao Z.-J."/>
            <person name="Shen Y."/>
            <person name="Qiang B.-Q."/>
            <person name="Xia Q.-C."/>
            <person name="Guo X.-K."/>
            <person name="Danchin A."/>
            <person name="Saint Girons I."/>
            <person name="Somerville R.L."/>
            <person name="Wen Y.-M."/>
            <person name="Shi M.-H."/>
            <person name="Chen Z."/>
            <person name="Xu J.-G."/>
            <person name="Zhao G.-P."/>
        </authorList>
    </citation>
    <scope>NUCLEOTIDE SEQUENCE [LARGE SCALE GENOMIC DNA]</scope>
    <source>
        <strain>56601</strain>
    </source>
</reference>
<proteinExistence type="inferred from homology"/>